<organism>
    <name type="scientific">Helicobacter acinonychis (strain Sheeba)</name>
    <dbReference type="NCBI Taxonomy" id="382638"/>
    <lineage>
        <taxon>Bacteria</taxon>
        <taxon>Pseudomonadati</taxon>
        <taxon>Campylobacterota</taxon>
        <taxon>Epsilonproteobacteria</taxon>
        <taxon>Campylobacterales</taxon>
        <taxon>Helicobacteraceae</taxon>
        <taxon>Helicobacter</taxon>
    </lineage>
</organism>
<protein>
    <recommendedName>
        <fullName evidence="1">Glutamate racemase</fullName>
        <ecNumber evidence="1">5.1.1.3</ecNumber>
    </recommendedName>
</protein>
<evidence type="ECO:0000255" key="1">
    <source>
        <dbReference type="HAMAP-Rule" id="MF_00258"/>
    </source>
</evidence>
<reference key="1">
    <citation type="journal article" date="2006" name="PLoS Genet.">
        <title>Who ate whom? Adaptive Helicobacter genomic changes that accompanied a host jump from early humans to large felines.</title>
        <authorList>
            <person name="Eppinger M."/>
            <person name="Baar C."/>
            <person name="Linz B."/>
            <person name="Raddatz G."/>
            <person name="Lanz C."/>
            <person name="Keller H."/>
            <person name="Morelli G."/>
            <person name="Gressmann H."/>
            <person name="Achtman M."/>
            <person name="Schuster S.C."/>
        </authorList>
    </citation>
    <scope>NUCLEOTIDE SEQUENCE [LARGE SCALE GENOMIC DNA]</scope>
    <source>
        <strain>Sheeba</strain>
    </source>
</reference>
<name>MURI_HELAH</name>
<gene>
    <name evidence="1" type="primary">murI</name>
    <name type="ordered locus">Hac_0876</name>
</gene>
<proteinExistence type="inferred from homology"/>
<comment type="function">
    <text evidence="1">Provides the (R)-glutamate required for cell wall biosynthesis.</text>
</comment>
<comment type="catalytic activity">
    <reaction evidence="1">
        <text>L-glutamate = D-glutamate</text>
        <dbReference type="Rhea" id="RHEA:12813"/>
        <dbReference type="ChEBI" id="CHEBI:29985"/>
        <dbReference type="ChEBI" id="CHEBI:29986"/>
        <dbReference type="EC" id="5.1.1.3"/>
    </reaction>
</comment>
<comment type="pathway">
    <text evidence="1">Cell wall biogenesis; peptidoglycan biosynthesis.</text>
</comment>
<comment type="similarity">
    <text evidence="1">Belongs to the aspartate/glutamate racemases family.</text>
</comment>
<feature type="chain" id="PRO_1000047572" description="Glutamate racemase">
    <location>
        <begin position="1"/>
        <end position="255"/>
    </location>
</feature>
<feature type="active site" description="Proton donor/acceptor" evidence="1">
    <location>
        <position position="70"/>
    </location>
</feature>
<feature type="active site" description="Proton donor/acceptor" evidence="1">
    <location>
        <position position="181"/>
    </location>
</feature>
<feature type="binding site" evidence="1">
    <location>
        <begin position="7"/>
        <end position="8"/>
    </location>
    <ligand>
        <name>substrate</name>
    </ligand>
</feature>
<feature type="binding site" evidence="1">
    <location>
        <begin position="39"/>
        <end position="40"/>
    </location>
    <ligand>
        <name>substrate</name>
    </ligand>
</feature>
<feature type="binding site" evidence="1">
    <location>
        <begin position="71"/>
        <end position="72"/>
    </location>
    <ligand>
        <name>substrate</name>
    </ligand>
</feature>
<feature type="binding site" evidence="1">
    <location>
        <begin position="182"/>
        <end position="183"/>
    </location>
    <ligand>
        <name>substrate</name>
    </ligand>
</feature>
<accession>Q17XG8</accession>
<sequence length="255" mass="28561">MKIGVFDSGVGGFSVLKSLLKAQLFDEIIYYGDSARVPYGTKDSATIKQFSLEALDFFKPHEIELLIVACNTASALALETMQKHSKIPIVGVIEPSILAIKQHVKDKNTPILVLGTKATIRSSAYDNALKQQGYLNVSHLATSLFVPLIEENVLEGELLETCMRYYFAPLKIFPEVIILGCTHFPLIAQKIESYFVEHFALSTPPLLIHSGDAIVEYLQQKYALKKNVYAFPKIEFHASGDVIWLEQQAKEWLKL</sequence>
<dbReference type="EC" id="5.1.1.3" evidence="1"/>
<dbReference type="EMBL" id="AM260522">
    <property type="protein sequence ID" value="CAJ99658.1"/>
    <property type="molecule type" value="Genomic_DNA"/>
</dbReference>
<dbReference type="RefSeq" id="WP_011577770.1">
    <property type="nucleotide sequence ID" value="NC_008229.1"/>
</dbReference>
<dbReference type="SMR" id="Q17XG8"/>
<dbReference type="STRING" id="382638.Hac_0876"/>
<dbReference type="GeneID" id="31758286"/>
<dbReference type="KEGG" id="hac:Hac_0876"/>
<dbReference type="eggNOG" id="COG0796">
    <property type="taxonomic scope" value="Bacteria"/>
</dbReference>
<dbReference type="HOGENOM" id="CLU_052344_0_2_7"/>
<dbReference type="OrthoDB" id="9801055at2"/>
<dbReference type="BioCyc" id="HACI382638:HAC_RS03775-MONOMER"/>
<dbReference type="UniPathway" id="UPA00219"/>
<dbReference type="Proteomes" id="UP000000775">
    <property type="component" value="Chromosome"/>
</dbReference>
<dbReference type="GO" id="GO:0008881">
    <property type="term" value="F:glutamate racemase activity"/>
    <property type="evidence" value="ECO:0007669"/>
    <property type="project" value="UniProtKB-UniRule"/>
</dbReference>
<dbReference type="GO" id="GO:0071555">
    <property type="term" value="P:cell wall organization"/>
    <property type="evidence" value="ECO:0007669"/>
    <property type="project" value="UniProtKB-KW"/>
</dbReference>
<dbReference type="GO" id="GO:0009252">
    <property type="term" value="P:peptidoglycan biosynthetic process"/>
    <property type="evidence" value="ECO:0007669"/>
    <property type="project" value="UniProtKB-UniRule"/>
</dbReference>
<dbReference type="GO" id="GO:0008360">
    <property type="term" value="P:regulation of cell shape"/>
    <property type="evidence" value="ECO:0007669"/>
    <property type="project" value="UniProtKB-KW"/>
</dbReference>
<dbReference type="FunFam" id="3.40.50.1860:FF:000001">
    <property type="entry name" value="Glutamate racemase"/>
    <property type="match status" value="1"/>
</dbReference>
<dbReference type="Gene3D" id="3.40.50.1860">
    <property type="match status" value="2"/>
</dbReference>
<dbReference type="HAMAP" id="MF_00258">
    <property type="entry name" value="Glu_racemase"/>
    <property type="match status" value="1"/>
</dbReference>
<dbReference type="InterPro" id="IPR015942">
    <property type="entry name" value="Asp/Glu/hydantoin_racemase"/>
</dbReference>
<dbReference type="InterPro" id="IPR001920">
    <property type="entry name" value="Asp/Glu_race"/>
</dbReference>
<dbReference type="InterPro" id="IPR018187">
    <property type="entry name" value="Asp/Glu_racemase_AS_1"/>
</dbReference>
<dbReference type="InterPro" id="IPR033134">
    <property type="entry name" value="Asp/Glu_racemase_AS_2"/>
</dbReference>
<dbReference type="InterPro" id="IPR004391">
    <property type="entry name" value="Glu_race"/>
</dbReference>
<dbReference type="NCBIfam" id="TIGR00067">
    <property type="entry name" value="glut_race"/>
    <property type="match status" value="1"/>
</dbReference>
<dbReference type="PANTHER" id="PTHR21198">
    <property type="entry name" value="GLUTAMATE RACEMASE"/>
    <property type="match status" value="1"/>
</dbReference>
<dbReference type="PANTHER" id="PTHR21198:SF2">
    <property type="entry name" value="GLUTAMATE RACEMASE"/>
    <property type="match status" value="1"/>
</dbReference>
<dbReference type="Pfam" id="PF01177">
    <property type="entry name" value="Asp_Glu_race"/>
    <property type="match status" value="1"/>
</dbReference>
<dbReference type="SUPFAM" id="SSF53681">
    <property type="entry name" value="Aspartate/glutamate racemase"/>
    <property type="match status" value="2"/>
</dbReference>
<dbReference type="PROSITE" id="PS00923">
    <property type="entry name" value="ASP_GLU_RACEMASE_1"/>
    <property type="match status" value="1"/>
</dbReference>
<dbReference type="PROSITE" id="PS00924">
    <property type="entry name" value="ASP_GLU_RACEMASE_2"/>
    <property type="match status" value="1"/>
</dbReference>
<keyword id="KW-0133">Cell shape</keyword>
<keyword id="KW-0961">Cell wall biogenesis/degradation</keyword>
<keyword id="KW-0413">Isomerase</keyword>
<keyword id="KW-0573">Peptidoglycan synthesis</keyword>